<organism>
    <name type="scientific">Homo sapiens</name>
    <name type="common">Human</name>
    <dbReference type="NCBI Taxonomy" id="9606"/>
    <lineage>
        <taxon>Eukaryota</taxon>
        <taxon>Metazoa</taxon>
        <taxon>Chordata</taxon>
        <taxon>Craniata</taxon>
        <taxon>Vertebrata</taxon>
        <taxon>Euteleostomi</taxon>
        <taxon>Mammalia</taxon>
        <taxon>Eutheria</taxon>
        <taxon>Euarchontoglires</taxon>
        <taxon>Primates</taxon>
        <taxon>Haplorrhini</taxon>
        <taxon>Catarrhini</taxon>
        <taxon>Hominidae</taxon>
        <taxon>Homo</taxon>
    </lineage>
</organism>
<accession>Q96M42</accession>
<accession>D3DSJ3</accession>
<gene>
    <name type="primary">LINC00479</name>
    <name type="synonym">C21orf129</name>
    <name type="ORF">PRED76</name>
</gene>
<dbReference type="EMBL" id="AK057397">
    <property type="protein sequence ID" value="BAB71470.1"/>
    <property type="molecule type" value="mRNA"/>
</dbReference>
<dbReference type="EMBL" id="AP001615">
    <property type="status" value="NOT_ANNOTATED_CDS"/>
    <property type="molecule type" value="Genomic_DNA"/>
</dbReference>
<dbReference type="EMBL" id="CH471079">
    <property type="protein sequence ID" value="EAX09593.1"/>
    <property type="molecule type" value="Genomic_DNA"/>
</dbReference>
<dbReference type="EMBL" id="CH471079">
    <property type="protein sequence ID" value="EAX09594.1"/>
    <property type="molecule type" value="Genomic_DNA"/>
</dbReference>
<dbReference type="BioMuta" id="HGNC:19727"/>
<dbReference type="jPOST" id="Q96M42"/>
<dbReference type="ProteomicsDB" id="77293"/>
<dbReference type="AGR" id="HGNC:19727"/>
<dbReference type="GeneCards" id="LINC00479"/>
<dbReference type="HGNC" id="HGNC:19727">
    <property type="gene designation" value="LINC00479"/>
</dbReference>
<dbReference type="neXtProt" id="NX_Q96M42"/>
<dbReference type="InParanoid" id="Q96M42"/>
<dbReference type="PAN-GO" id="Q96M42">
    <property type="GO annotations" value="0 GO annotations based on evolutionary models"/>
</dbReference>
<dbReference type="Pharos" id="Q96M42">
    <property type="development level" value="Tdark"/>
</dbReference>
<dbReference type="Proteomes" id="UP000005640">
    <property type="component" value="Unplaced"/>
</dbReference>
<dbReference type="RNAct" id="Q96M42">
    <property type="molecule type" value="protein"/>
</dbReference>
<protein>
    <recommendedName>
        <fullName>Putative uncharacterized protein encoded by LINC00479</fullName>
    </recommendedName>
</protein>
<comment type="caution">
    <text evidence="1">Product of a dubious CDS prediction. May be a non-coding RNA.</text>
</comment>
<feature type="chain" id="PRO_0000079556" description="Putative uncharacterized protein encoded by LINC00479">
    <location>
        <begin position="1"/>
        <end position="142"/>
    </location>
</feature>
<feature type="sequence conflict" description="In Ref. 1; BAB71470." evidence="1" ref="1">
    <original>C</original>
    <variation>R</variation>
    <location>
        <position position="65"/>
    </location>
</feature>
<sequence length="142" mass="15208">MDGGSLRASPAAMDGGALEPAQQLSSLEGWTGQDRLLIPRWREARSLSWMQSPDLESSKCLTQGCCYPQAWILACSAALLQALASSDLQGSLDRVNYSRGLGPRVRLFVFPDTVGSTRKSGSTGNICSVMLNVATGCVRIEK</sequence>
<name>CU129_HUMAN</name>
<keyword id="KW-1185">Reference proteome</keyword>
<proteinExistence type="uncertain"/>
<evidence type="ECO:0000305" key="1"/>
<reference key="1">
    <citation type="journal article" date="2004" name="Nat. Genet.">
        <title>Complete sequencing and characterization of 21,243 full-length human cDNAs.</title>
        <authorList>
            <person name="Ota T."/>
            <person name="Suzuki Y."/>
            <person name="Nishikawa T."/>
            <person name="Otsuki T."/>
            <person name="Sugiyama T."/>
            <person name="Irie R."/>
            <person name="Wakamatsu A."/>
            <person name="Hayashi K."/>
            <person name="Sato H."/>
            <person name="Nagai K."/>
            <person name="Kimura K."/>
            <person name="Makita H."/>
            <person name="Sekine M."/>
            <person name="Obayashi M."/>
            <person name="Nishi T."/>
            <person name="Shibahara T."/>
            <person name="Tanaka T."/>
            <person name="Ishii S."/>
            <person name="Yamamoto J."/>
            <person name="Saito K."/>
            <person name="Kawai Y."/>
            <person name="Isono Y."/>
            <person name="Nakamura Y."/>
            <person name="Nagahari K."/>
            <person name="Murakami K."/>
            <person name="Yasuda T."/>
            <person name="Iwayanagi T."/>
            <person name="Wagatsuma M."/>
            <person name="Shiratori A."/>
            <person name="Sudo H."/>
            <person name="Hosoiri T."/>
            <person name="Kaku Y."/>
            <person name="Kodaira H."/>
            <person name="Kondo H."/>
            <person name="Sugawara M."/>
            <person name="Takahashi M."/>
            <person name="Kanda K."/>
            <person name="Yokoi T."/>
            <person name="Furuya T."/>
            <person name="Kikkawa E."/>
            <person name="Omura Y."/>
            <person name="Abe K."/>
            <person name="Kamihara K."/>
            <person name="Katsuta N."/>
            <person name="Sato K."/>
            <person name="Tanikawa M."/>
            <person name="Yamazaki M."/>
            <person name="Ninomiya K."/>
            <person name="Ishibashi T."/>
            <person name="Yamashita H."/>
            <person name="Murakawa K."/>
            <person name="Fujimori K."/>
            <person name="Tanai H."/>
            <person name="Kimata M."/>
            <person name="Watanabe M."/>
            <person name="Hiraoka S."/>
            <person name="Chiba Y."/>
            <person name="Ishida S."/>
            <person name="Ono Y."/>
            <person name="Takiguchi S."/>
            <person name="Watanabe S."/>
            <person name="Yosida M."/>
            <person name="Hotuta T."/>
            <person name="Kusano J."/>
            <person name="Kanehori K."/>
            <person name="Takahashi-Fujii A."/>
            <person name="Hara H."/>
            <person name="Tanase T.-O."/>
            <person name="Nomura Y."/>
            <person name="Togiya S."/>
            <person name="Komai F."/>
            <person name="Hara R."/>
            <person name="Takeuchi K."/>
            <person name="Arita M."/>
            <person name="Imose N."/>
            <person name="Musashino K."/>
            <person name="Yuuki H."/>
            <person name="Oshima A."/>
            <person name="Sasaki N."/>
            <person name="Aotsuka S."/>
            <person name="Yoshikawa Y."/>
            <person name="Matsunawa H."/>
            <person name="Ichihara T."/>
            <person name="Shiohata N."/>
            <person name="Sano S."/>
            <person name="Moriya S."/>
            <person name="Momiyama H."/>
            <person name="Satoh N."/>
            <person name="Takami S."/>
            <person name="Terashima Y."/>
            <person name="Suzuki O."/>
            <person name="Nakagawa S."/>
            <person name="Senoh A."/>
            <person name="Mizoguchi H."/>
            <person name="Goto Y."/>
            <person name="Shimizu F."/>
            <person name="Wakebe H."/>
            <person name="Hishigaki H."/>
            <person name="Watanabe T."/>
            <person name="Sugiyama A."/>
            <person name="Takemoto M."/>
            <person name="Kawakami B."/>
            <person name="Yamazaki M."/>
            <person name="Watanabe K."/>
            <person name="Kumagai A."/>
            <person name="Itakura S."/>
            <person name="Fukuzumi Y."/>
            <person name="Fujimori Y."/>
            <person name="Komiyama M."/>
            <person name="Tashiro H."/>
            <person name="Tanigami A."/>
            <person name="Fujiwara T."/>
            <person name="Ono T."/>
            <person name="Yamada K."/>
            <person name="Fujii Y."/>
            <person name="Ozaki K."/>
            <person name="Hirao M."/>
            <person name="Ohmori Y."/>
            <person name="Kawabata A."/>
            <person name="Hikiji T."/>
            <person name="Kobatake N."/>
            <person name="Inagaki H."/>
            <person name="Ikema Y."/>
            <person name="Okamoto S."/>
            <person name="Okitani R."/>
            <person name="Kawakami T."/>
            <person name="Noguchi S."/>
            <person name="Itoh T."/>
            <person name="Shigeta K."/>
            <person name="Senba T."/>
            <person name="Matsumura K."/>
            <person name="Nakajima Y."/>
            <person name="Mizuno T."/>
            <person name="Morinaga M."/>
            <person name="Sasaki M."/>
            <person name="Togashi T."/>
            <person name="Oyama M."/>
            <person name="Hata H."/>
            <person name="Watanabe M."/>
            <person name="Komatsu T."/>
            <person name="Mizushima-Sugano J."/>
            <person name="Satoh T."/>
            <person name="Shirai Y."/>
            <person name="Takahashi Y."/>
            <person name="Nakagawa K."/>
            <person name="Okumura K."/>
            <person name="Nagase T."/>
            <person name="Nomura N."/>
            <person name="Kikuchi H."/>
            <person name="Masuho Y."/>
            <person name="Yamashita R."/>
            <person name="Nakai K."/>
            <person name="Yada T."/>
            <person name="Nakamura Y."/>
            <person name="Ohara O."/>
            <person name="Isogai T."/>
            <person name="Sugano S."/>
        </authorList>
    </citation>
    <scope>NUCLEOTIDE SEQUENCE [LARGE SCALE MRNA]</scope>
    <source>
        <tissue>Testis</tissue>
    </source>
</reference>
<reference key="2">
    <citation type="journal article" date="2000" name="Nature">
        <title>The DNA sequence of human chromosome 21.</title>
        <authorList>
            <person name="Hattori M."/>
            <person name="Fujiyama A."/>
            <person name="Taylor T.D."/>
            <person name="Watanabe H."/>
            <person name="Yada T."/>
            <person name="Park H.-S."/>
            <person name="Toyoda A."/>
            <person name="Ishii K."/>
            <person name="Totoki Y."/>
            <person name="Choi D.-K."/>
            <person name="Groner Y."/>
            <person name="Soeda E."/>
            <person name="Ohki M."/>
            <person name="Takagi T."/>
            <person name="Sakaki Y."/>
            <person name="Taudien S."/>
            <person name="Blechschmidt K."/>
            <person name="Polley A."/>
            <person name="Menzel U."/>
            <person name="Delabar J."/>
            <person name="Kumpf K."/>
            <person name="Lehmann R."/>
            <person name="Patterson D."/>
            <person name="Reichwald K."/>
            <person name="Rump A."/>
            <person name="Schillhabel M."/>
            <person name="Schudy A."/>
            <person name="Zimmermann W."/>
            <person name="Rosenthal A."/>
            <person name="Kudoh J."/>
            <person name="Shibuya K."/>
            <person name="Kawasaki K."/>
            <person name="Asakawa S."/>
            <person name="Shintani A."/>
            <person name="Sasaki T."/>
            <person name="Nagamine K."/>
            <person name="Mitsuyama S."/>
            <person name="Antonarakis S.E."/>
            <person name="Minoshima S."/>
            <person name="Shimizu N."/>
            <person name="Nordsiek G."/>
            <person name="Hornischer K."/>
            <person name="Brandt P."/>
            <person name="Scharfe M."/>
            <person name="Schoen O."/>
            <person name="Desario A."/>
            <person name="Reichelt J."/>
            <person name="Kauer G."/>
            <person name="Bloecker H."/>
            <person name="Ramser J."/>
            <person name="Beck A."/>
            <person name="Klages S."/>
            <person name="Hennig S."/>
            <person name="Riesselmann L."/>
            <person name="Dagand E."/>
            <person name="Wehrmeyer S."/>
            <person name="Borzym K."/>
            <person name="Gardiner K."/>
            <person name="Nizetic D."/>
            <person name="Francis F."/>
            <person name="Lehrach H."/>
            <person name="Reinhardt R."/>
            <person name="Yaspo M.-L."/>
        </authorList>
    </citation>
    <scope>NUCLEOTIDE SEQUENCE [LARGE SCALE GENOMIC DNA]</scope>
</reference>
<reference key="3">
    <citation type="submission" date="2005-09" db="EMBL/GenBank/DDBJ databases">
        <authorList>
            <person name="Mural R.J."/>
            <person name="Istrail S."/>
            <person name="Sutton G.G."/>
            <person name="Florea L."/>
            <person name="Halpern A.L."/>
            <person name="Mobarry C.M."/>
            <person name="Lippert R."/>
            <person name="Walenz B."/>
            <person name="Shatkay H."/>
            <person name="Dew I."/>
            <person name="Miller J.R."/>
            <person name="Flanigan M.J."/>
            <person name="Edwards N.J."/>
            <person name="Bolanos R."/>
            <person name="Fasulo D."/>
            <person name="Halldorsson B.V."/>
            <person name="Hannenhalli S."/>
            <person name="Turner R."/>
            <person name="Yooseph S."/>
            <person name="Lu F."/>
            <person name="Nusskern D.R."/>
            <person name="Shue B.C."/>
            <person name="Zheng X.H."/>
            <person name="Zhong F."/>
            <person name="Delcher A.L."/>
            <person name="Huson D.H."/>
            <person name="Kravitz S.A."/>
            <person name="Mouchard L."/>
            <person name="Reinert K."/>
            <person name="Remington K.A."/>
            <person name="Clark A.G."/>
            <person name="Waterman M.S."/>
            <person name="Eichler E.E."/>
            <person name="Adams M.D."/>
            <person name="Hunkapiller M.W."/>
            <person name="Myers E.W."/>
            <person name="Venter J.C."/>
        </authorList>
    </citation>
    <scope>NUCLEOTIDE SEQUENCE [LARGE SCALE GENOMIC DNA]</scope>
</reference>